<organism>
    <name type="scientific">Schizosaccharomyces pombe (strain 972 / ATCC 24843)</name>
    <name type="common">Fission yeast</name>
    <dbReference type="NCBI Taxonomy" id="284812"/>
    <lineage>
        <taxon>Eukaryota</taxon>
        <taxon>Fungi</taxon>
        <taxon>Dikarya</taxon>
        <taxon>Ascomycota</taxon>
        <taxon>Taphrinomycotina</taxon>
        <taxon>Schizosaccharomycetes</taxon>
        <taxon>Schizosaccharomycetales</taxon>
        <taxon>Schizosaccharomycetaceae</taxon>
        <taxon>Schizosaccharomyces</taxon>
    </lineage>
</organism>
<reference key="1">
    <citation type="journal article" date="2002" name="Nature">
        <title>The genome sequence of Schizosaccharomyces pombe.</title>
        <authorList>
            <person name="Wood V."/>
            <person name="Gwilliam R."/>
            <person name="Rajandream M.A."/>
            <person name="Lyne M.H."/>
            <person name="Lyne R."/>
            <person name="Stewart A."/>
            <person name="Sgouros J.G."/>
            <person name="Peat N."/>
            <person name="Hayles J."/>
            <person name="Baker S.G."/>
            <person name="Basham D."/>
            <person name="Bowman S."/>
            <person name="Brooks K."/>
            <person name="Brown D."/>
            <person name="Brown S."/>
            <person name="Chillingworth T."/>
            <person name="Churcher C.M."/>
            <person name="Collins M."/>
            <person name="Connor R."/>
            <person name="Cronin A."/>
            <person name="Davis P."/>
            <person name="Feltwell T."/>
            <person name="Fraser A."/>
            <person name="Gentles S."/>
            <person name="Goble A."/>
            <person name="Hamlin N."/>
            <person name="Harris D.E."/>
            <person name="Hidalgo J."/>
            <person name="Hodgson G."/>
            <person name="Holroyd S."/>
            <person name="Hornsby T."/>
            <person name="Howarth S."/>
            <person name="Huckle E.J."/>
            <person name="Hunt S."/>
            <person name="Jagels K."/>
            <person name="James K.D."/>
            <person name="Jones L."/>
            <person name="Jones M."/>
            <person name="Leather S."/>
            <person name="McDonald S."/>
            <person name="McLean J."/>
            <person name="Mooney P."/>
            <person name="Moule S."/>
            <person name="Mungall K.L."/>
            <person name="Murphy L.D."/>
            <person name="Niblett D."/>
            <person name="Odell C."/>
            <person name="Oliver K."/>
            <person name="O'Neil S."/>
            <person name="Pearson D."/>
            <person name="Quail M.A."/>
            <person name="Rabbinowitsch E."/>
            <person name="Rutherford K.M."/>
            <person name="Rutter S."/>
            <person name="Saunders D."/>
            <person name="Seeger K."/>
            <person name="Sharp S."/>
            <person name="Skelton J."/>
            <person name="Simmonds M.N."/>
            <person name="Squares R."/>
            <person name="Squares S."/>
            <person name="Stevens K."/>
            <person name="Taylor K."/>
            <person name="Taylor R.G."/>
            <person name="Tivey A."/>
            <person name="Walsh S.V."/>
            <person name="Warren T."/>
            <person name="Whitehead S."/>
            <person name="Woodward J.R."/>
            <person name="Volckaert G."/>
            <person name="Aert R."/>
            <person name="Robben J."/>
            <person name="Grymonprez B."/>
            <person name="Weltjens I."/>
            <person name="Vanstreels E."/>
            <person name="Rieger M."/>
            <person name="Schaefer M."/>
            <person name="Mueller-Auer S."/>
            <person name="Gabel C."/>
            <person name="Fuchs M."/>
            <person name="Duesterhoeft A."/>
            <person name="Fritzc C."/>
            <person name="Holzer E."/>
            <person name="Moestl D."/>
            <person name="Hilbert H."/>
            <person name="Borzym K."/>
            <person name="Langer I."/>
            <person name="Beck A."/>
            <person name="Lehrach H."/>
            <person name="Reinhardt R."/>
            <person name="Pohl T.M."/>
            <person name="Eger P."/>
            <person name="Zimmermann W."/>
            <person name="Wedler H."/>
            <person name="Wambutt R."/>
            <person name="Purnelle B."/>
            <person name="Goffeau A."/>
            <person name="Cadieu E."/>
            <person name="Dreano S."/>
            <person name="Gloux S."/>
            <person name="Lelaure V."/>
            <person name="Mottier S."/>
            <person name="Galibert F."/>
            <person name="Aves S.J."/>
            <person name="Xiang Z."/>
            <person name="Hunt C."/>
            <person name="Moore K."/>
            <person name="Hurst S.M."/>
            <person name="Lucas M."/>
            <person name="Rochet M."/>
            <person name="Gaillardin C."/>
            <person name="Tallada V.A."/>
            <person name="Garzon A."/>
            <person name="Thode G."/>
            <person name="Daga R.R."/>
            <person name="Cruzado L."/>
            <person name="Jimenez J."/>
            <person name="Sanchez M."/>
            <person name="del Rey F."/>
            <person name="Benito J."/>
            <person name="Dominguez A."/>
            <person name="Revuelta J.L."/>
            <person name="Moreno S."/>
            <person name="Armstrong J."/>
            <person name="Forsburg S.L."/>
            <person name="Cerutti L."/>
            <person name="Lowe T."/>
            <person name="McCombie W.R."/>
            <person name="Paulsen I."/>
            <person name="Potashkin J."/>
            <person name="Shpakovski G.V."/>
            <person name="Ussery D."/>
            <person name="Barrell B.G."/>
            <person name="Nurse P."/>
        </authorList>
    </citation>
    <scope>NUCLEOTIDE SEQUENCE [LARGE SCALE GENOMIC DNA]</scope>
    <source>
        <strain>972 / ATCC 24843</strain>
    </source>
</reference>
<reference key="2">
    <citation type="journal article" date="2006" name="Nat. Biotechnol.">
        <title>ORFeome cloning and global analysis of protein localization in the fission yeast Schizosaccharomyces pombe.</title>
        <authorList>
            <person name="Matsuyama A."/>
            <person name="Arai R."/>
            <person name="Yashiroda Y."/>
            <person name="Shirai A."/>
            <person name="Kamata A."/>
            <person name="Sekido S."/>
            <person name="Kobayashi Y."/>
            <person name="Hashimoto A."/>
            <person name="Hamamoto M."/>
            <person name="Hiraoka Y."/>
            <person name="Horinouchi S."/>
            <person name="Yoshida M."/>
        </authorList>
    </citation>
    <scope>SUBCELLULAR LOCATION [LARGE SCALE ANALYSIS]</scope>
</reference>
<name>INP2_SCHPO</name>
<evidence type="ECO:0000250" key="1"/>
<evidence type="ECO:0000255" key="2"/>
<evidence type="ECO:0000269" key="3">
    <source>
    </source>
</evidence>
<evidence type="ECO:0000305" key="4"/>
<comment type="function">
    <text evidence="1">Required for peroxisome inheritance. Acts as the peroxisome-specific receptor for the myosin V motor myo2 (By similarity).</text>
</comment>
<comment type="subcellular location">
    <subcellularLocation>
        <location evidence="1">Peroxisome membrane</location>
        <topology evidence="1">Multi-pass membrane protein</topology>
    </subcellularLocation>
    <text evidence="3">Localizes at the barrier septum and the cell tip.</text>
</comment>
<comment type="similarity">
    <text evidence="4">Belongs to the INP2 family.</text>
</comment>
<accession>Q9USW2</accession>
<feature type="chain" id="PRO_0000304024" description="Inheritance of peroxisomes protein 2">
    <location>
        <begin position="1"/>
        <end position="470"/>
    </location>
</feature>
<feature type="transmembrane region" description="Helical" evidence="2">
    <location>
        <begin position="22"/>
        <end position="44"/>
    </location>
</feature>
<feature type="transmembrane region" description="Helical" evidence="2">
    <location>
        <begin position="111"/>
        <end position="131"/>
    </location>
</feature>
<feature type="transmembrane region" description="Helical" evidence="2">
    <location>
        <begin position="135"/>
        <end position="155"/>
    </location>
</feature>
<feature type="glycosylation site" description="N-linked (GlcNAc...) asparagine" evidence="2">
    <location>
        <position position="204"/>
    </location>
</feature>
<feature type="glycosylation site" description="N-linked (GlcNAc...) asparagine" evidence="2">
    <location>
        <position position="221"/>
    </location>
</feature>
<feature type="glycosylation site" description="N-linked (GlcNAc...) asparagine" evidence="2">
    <location>
        <position position="385"/>
    </location>
</feature>
<sequence>MNVDTQLSRDGLYSSLRTRYKVYISMHAFAIWHRFISFLAIYLWPCIMGSVNLNLQDRENEYFFDSIQYIIYTSELLVGDHELQRSHHEEQPSLVYPSSSFSSTSKFWRYFAYLLSLQIVIDFVLYKLSSAMASLHYLKFVKIIALSYICFSSLIRICHCWTYFIRIMGLSSLNKFVNLLHDFETTSNRVYSQICELEANSAANRSRLMDFLPANDPLLFNLTEQNTLSYELSGLYEKLLPRYQLVLSRIYPYAAASNLRNLLSLYRLPNCFGKLNSFDLRKGSSTSLKRSSMYLARKENQDFDDQSTQILNHIKTAYYELTIISKQVLCCILSFPVDSFLAERSSWLIVHREVGDLSNALSVSMVRLVDILKFSVESVNRNQHNTTSKPFPRIMCKENLRSLFNELHSVMMETHESISSYIQEGDNTAMQTYAMDEYDQVGLLLKDLLSEWDFNRALLLNLQHMHRKRK</sequence>
<dbReference type="EMBL" id="CU329671">
    <property type="protein sequence ID" value="CAB57924.1"/>
    <property type="molecule type" value="Genomic_DNA"/>
</dbReference>
<dbReference type="PIR" id="T39921">
    <property type="entry name" value="T39921"/>
</dbReference>
<dbReference type="RefSeq" id="NP_595681.1">
    <property type="nucleotide sequence ID" value="NM_001021576.2"/>
</dbReference>
<dbReference type="SMR" id="Q9USW2"/>
<dbReference type="BioGRID" id="277118">
    <property type="interactions" value="3"/>
</dbReference>
<dbReference type="STRING" id="284812.Q9USW2"/>
<dbReference type="GlyCosmos" id="Q9USW2">
    <property type="glycosylation" value="3 sites, No reported glycans"/>
</dbReference>
<dbReference type="iPTMnet" id="Q9USW2"/>
<dbReference type="PaxDb" id="4896-SPBC21B10.06c.1"/>
<dbReference type="EnsemblFungi" id="SPBC21B10.06c.1">
    <property type="protein sequence ID" value="SPBC21B10.06c.1:pep"/>
    <property type="gene ID" value="SPBC21B10.06c"/>
</dbReference>
<dbReference type="GeneID" id="2540592"/>
<dbReference type="KEGG" id="spo:2540592"/>
<dbReference type="PomBase" id="SPBC21B10.06c">
    <property type="gene designation" value="inp2"/>
</dbReference>
<dbReference type="VEuPathDB" id="FungiDB:SPBC21B10.06c"/>
<dbReference type="HOGENOM" id="CLU_567610_0_0_1"/>
<dbReference type="InParanoid" id="Q9USW2"/>
<dbReference type="OMA" id="FAMLETH"/>
<dbReference type="PRO" id="PR:Q9USW2"/>
<dbReference type="Proteomes" id="UP000002485">
    <property type="component" value="Chromosome II"/>
</dbReference>
<dbReference type="GO" id="GO:0032153">
    <property type="term" value="C:cell division site"/>
    <property type="evidence" value="ECO:0007005"/>
    <property type="project" value="PomBase"/>
</dbReference>
<dbReference type="GO" id="GO:0051286">
    <property type="term" value="C:cell tip"/>
    <property type="evidence" value="ECO:0007005"/>
    <property type="project" value="PomBase"/>
</dbReference>
<dbReference type="GO" id="GO:0005778">
    <property type="term" value="C:peroxisomal membrane"/>
    <property type="evidence" value="ECO:0000266"/>
    <property type="project" value="PomBase"/>
</dbReference>
<dbReference type="GO" id="GO:0017022">
    <property type="term" value="F:myosin binding"/>
    <property type="evidence" value="ECO:0000255"/>
    <property type="project" value="PomBase"/>
</dbReference>
<dbReference type="GO" id="GO:0043495">
    <property type="term" value="F:protein-membrane adaptor activity"/>
    <property type="evidence" value="ECO:0000266"/>
    <property type="project" value="PomBase"/>
</dbReference>
<dbReference type="GO" id="GO:0045033">
    <property type="term" value="P:peroxisome inheritance"/>
    <property type="evidence" value="ECO:0000266"/>
    <property type="project" value="PomBase"/>
</dbReference>
<proteinExistence type="inferred from homology"/>
<keyword id="KW-0325">Glycoprotein</keyword>
<keyword id="KW-0472">Membrane</keyword>
<keyword id="KW-0576">Peroxisome</keyword>
<keyword id="KW-0675">Receptor</keyword>
<keyword id="KW-1185">Reference proteome</keyword>
<keyword id="KW-0812">Transmembrane</keyword>
<keyword id="KW-1133">Transmembrane helix</keyword>
<protein>
    <recommendedName>
        <fullName>Inheritance of peroxisomes protein 2</fullName>
    </recommendedName>
</protein>
<gene>
    <name type="primary">inp2</name>
    <name type="ORF">SPBC21B10.06c</name>
</gene>